<evidence type="ECO:0000255" key="1">
    <source>
        <dbReference type="HAMAP-Rule" id="MF_00402"/>
    </source>
</evidence>
<evidence type="ECO:0000305" key="2"/>
<feature type="chain" id="PRO_1000060800" description="Large ribosomal subunit protein bL19">
    <location>
        <begin position="1"/>
        <end position="115"/>
    </location>
</feature>
<protein>
    <recommendedName>
        <fullName evidence="1">Large ribosomal subunit protein bL19</fullName>
    </recommendedName>
    <alternativeName>
        <fullName evidence="2">50S ribosomal protein L19</fullName>
    </alternativeName>
</protein>
<organism>
    <name type="scientific">Bacillus pumilus (strain SAFR-032)</name>
    <dbReference type="NCBI Taxonomy" id="315750"/>
    <lineage>
        <taxon>Bacteria</taxon>
        <taxon>Bacillati</taxon>
        <taxon>Bacillota</taxon>
        <taxon>Bacilli</taxon>
        <taxon>Bacillales</taxon>
        <taxon>Bacillaceae</taxon>
        <taxon>Bacillus</taxon>
    </lineage>
</organism>
<name>RL19_BACP2</name>
<dbReference type="EMBL" id="CP000813">
    <property type="protein sequence ID" value="ABV62185.1"/>
    <property type="molecule type" value="Genomic_DNA"/>
</dbReference>
<dbReference type="RefSeq" id="WP_012009940.1">
    <property type="nucleotide sequence ID" value="NZ_VEIS01000003.1"/>
</dbReference>
<dbReference type="SMR" id="A8FD68"/>
<dbReference type="STRING" id="315750.BPUM_1502"/>
<dbReference type="GeneID" id="5620765"/>
<dbReference type="KEGG" id="bpu:BPUM_1502"/>
<dbReference type="eggNOG" id="COG0335">
    <property type="taxonomic scope" value="Bacteria"/>
</dbReference>
<dbReference type="HOGENOM" id="CLU_103507_2_1_9"/>
<dbReference type="OrthoDB" id="9803541at2"/>
<dbReference type="Proteomes" id="UP000001355">
    <property type="component" value="Chromosome"/>
</dbReference>
<dbReference type="GO" id="GO:0022625">
    <property type="term" value="C:cytosolic large ribosomal subunit"/>
    <property type="evidence" value="ECO:0007669"/>
    <property type="project" value="TreeGrafter"/>
</dbReference>
<dbReference type="GO" id="GO:0003735">
    <property type="term" value="F:structural constituent of ribosome"/>
    <property type="evidence" value="ECO:0007669"/>
    <property type="project" value="InterPro"/>
</dbReference>
<dbReference type="GO" id="GO:0006412">
    <property type="term" value="P:translation"/>
    <property type="evidence" value="ECO:0007669"/>
    <property type="project" value="UniProtKB-UniRule"/>
</dbReference>
<dbReference type="FunFam" id="2.30.30.790:FF:000001">
    <property type="entry name" value="50S ribosomal protein L19"/>
    <property type="match status" value="1"/>
</dbReference>
<dbReference type="Gene3D" id="2.30.30.790">
    <property type="match status" value="1"/>
</dbReference>
<dbReference type="HAMAP" id="MF_00402">
    <property type="entry name" value="Ribosomal_bL19"/>
    <property type="match status" value="1"/>
</dbReference>
<dbReference type="InterPro" id="IPR001857">
    <property type="entry name" value="Ribosomal_bL19"/>
</dbReference>
<dbReference type="InterPro" id="IPR018257">
    <property type="entry name" value="Ribosomal_bL19_CS"/>
</dbReference>
<dbReference type="InterPro" id="IPR038657">
    <property type="entry name" value="Ribosomal_bL19_sf"/>
</dbReference>
<dbReference type="InterPro" id="IPR008991">
    <property type="entry name" value="Translation_prot_SH3-like_sf"/>
</dbReference>
<dbReference type="NCBIfam" id="TIGR01024">
    <property type="entry name" value="rplS_bact"/>
    <property type="match status" value="1"/>
</dbReference>
<dbReference type="PANTHER" id="PTHR15680:SF9">
    <property type="entry name" value="LARGE RIBOSOMAL SUBUNIT PROTEIN BL19M"/>
    <property type="match status" value="1"/>
</dbReference>
<dbReference type="PANTHER" id="PTHR15680">
    <property type="entry name" value="RIBOSOMAL PROTEIN L19"/>
    <property type="match status" value="1"/>
</dbReference>
<dbReference type="Pfam" id="PF01245">
    <property type="entry name" value="Ribosomal_L19"/>
    <property type="match status" value="1"/>
</dbReference>
<dbReference type="PIRSF" id="PIRSF002191">
    <property type="entry name" value="Ribosomal_L19"/>
    <property type="match status" value="1"/>
</dbReference>
<dbReference type="PRINTS" id="PR00061">
    <property type="entry name" value="RIBOSOMALL19"/>
</dbReference>
<dbReference type="SUPFAM" id="SSF50104">
    <property type="entry name" value="Translation proteins SH3-like domain"/>
    <property type="match status" value="1"/>
</dbReference>
<dbReference type="PROSITE" id="PS01015">
    <property type="entry name" value="RIBOSOMAL_L19"/>
    <property type="match status" value="1"/>
</dbReference>
<proteinExistence type="inferred from homology"/>
<reference key="1">
    <citation type="journal article" date="2007" name="PLoS ONE">
        <title>Paradoxical DNA repair and peroxide resistance gene conservation in Bacillus pumilus SAFR-032.</title>
        <authorList>
            <person name="Gioia J."/>
            <person name="Yerrapragada S."/>
            <person name="Qin X."/>
            <person name="Jiang H."/>
            <person name="Igboeli O.C."/>
            <person name="Muzny D."/>
            <person name="Dugan-Rocha S."/>
            <person name="Ding Y."/>
            <person name="Hawes A."/>
            <person name="Liu W."/>
            <person name="Perez L."/>
            <person name="Kovar C."/>
            <person name="Dinh H."/>
            <person name="Lee S."/>
            <person name="Nazareth L."/>
            <person name="Blyth P."/>
            <person name="Holder M."/>
            <person name="Buhay C."/>
            <person name="Tirumalai M.R."/>
            <person name="Liu Y."/>
            <person name="Dasgupta I."/>
            <person name="Bokhetache L."/>
            <person name="Fujita M."/>
            <person name="Karouia F."/>
            <person name="Eswara Moorthy P."/>
            <person name="Siefert J."/>
            <person name="Uzman A."/>
            <person name="Buzumbo P."/>
            <person name="Verma A."/>
            <person name="Zwiya H."/>
            <person name="McWilliams B.D."/>
            <person name="Olowu A."/>
            <person name="Clinkenbeard K.D."/>
            <person name="Newcombe D."/>
            <person name="Golebiewski L."/>
            <person name="Petrosino J.F."/>
            <person name="Nicholson W.L."/>
            <person name="Fox G.E."/>
            <person name="Venkateswaran K."/>
            <person name="Highlander S.K."/>
            <person name="Weinstock G.M."/>
        </authorList>
    </citation>
    <scope>NUCLEOTIDE SEQUENCE [LARGE SCALE GENOMIC DNA]</scope>
    <source>
        <strain>SAFR-032</strain>
    </source>
</reference>
<comment type="function">
    <text evidence="1">This protein is located at the 30S-50S ribosomal subunit interface and may play a role in the structure and function of the aminoacyl-tRNA binding site.</text>
</comment>
<comment type="similarity">
    <text evidence="1">Belongs to the bacterial ribosomal protein bL19 family.</text>
</comment>
<gene>
    <name evidence="1" type="primary">rplS</name>
    <name type="ordered locus">BPUM_1502</name>
</gene>
<sequence length="115" mass="13348">MQQLIEEITKEQLRTDLPAFRPGDTLRVHVKVVEGTRERIQIFEGVVIKRRGGGISETFTVRKISYGVGVERTFPVHTPKIANIEVVRHGKVRRAKLYYLRELRGKAARIKEIRR</sequence>
<keyword id="KW-0687">Ribonucleoprotein</keyword>
<keyword id="KW-0689">Ribosomal protein</keyword>
<accession>A8FD68</accession>